<reference key="1">
    <citation type="journal article" date="2017" name="Nat. Chem. Biol.">
        <title>Parallel evolution of non-homologous isofunctional enzymes in methionine biosynthesis.</title>
        <authorList>
            <person name="Bastard K."/>
            <person name="Perret A."/>
            <person name="Mariage A."/>
            <person name="Bessonnet T."/>
            <person name="Pinet-Turpault A."/>
            <person name="Petit J.L."/>
            <person name="Darii E."/>
            <person name="Bazire P."/>
            <person name="Vergne-Vaxelaire C."/>
            <person name="Brewee C."/>
            <person name="Debard A."/>
            <person name="Pellouin V."/>
            <person name="Besnard-Gonnet M."/>
            <person name="Artiguenave F."/>
            <person name="Medigue C."/>
            <person name="Vallenet D."/>
            <person name="Danchin A."/>
            <person name="Zaparucha A."/>
            <person name="Weissenbach J."/>
            <person name="Salanoubat M."/>
            <person name="de Berardinis V."/>
        </authorList>
    </citation>
    <scope>NUCLEOTIDE SEQUENCE [GENOMIC DNA]</scope>
    <scope>FUNCTION</scope>
    <scope>CATALYTIC ACTIVITY</scope>
    <source>
        <strain>ATCC 33913 / DSM 3586 / NCPPB 528 / LMG 568 / P 25</strain>
    </source>
</reference>
<reference key="2">
    <citation type="journal article" date="2002" name="Nature">
        <title>Comparison of the genomes of two Xanthomonas pathogens with differing host specificities.</title>
        <authorList>
            <person name="da Silva A.C.R."/>
            <person name="Ferro J.A."/>
            <person name="Reinach F.C."/>
            <person name="Farah C.S."/>
            <person name="Furlan L.R."/>
            <person name="Quaggio R.B."/>
            <person name="Monteiro-Vitorello C.B."/>
            <person name="Van Sluys M.A."/>
            <person name="Almeida N.F. Jr."/>
            <person name="Alves L.M.C."/>
            <person name="do Amaral A.M."/>
            <person name="Bertolini M.C."/>
            <person name="Camargo L.E.A."/>
            <person name="Camarotte G."/>
            <person name="Cannavan F."/>
            <person name="Cardozo J."/>
            <person name="Chambergo F."/>
            <person name="Ciapina L.P."/>
            <person name="Cicarelli R.M.B."/>
            <person name="Coutinho L.L."/>
            <person name="Cursino-Santos J.R."/>
            <person name="El-Dorry H."/>
            <person name="Faria J.B."/>
            <person name="Ferreira A.J.S."/>
            <person name="Ferreira R.C.C."/>
            <person name="Ferro M.I.T."/>
            <person name="Formighieri E.F."/>
            <person name="Franco M.C."/>
            <person name="Greggio C.C."/>
            <person name="Gruber A."/>
            <person name="Katsuyama A.M."/>
            <person name="Kishi L.T."/>
            <person name="Leite R.P."/>
            <person name="Lemos E.G.M."/>
            <person name="Lemos M.V.F."/>
            <person name="Locali E.C."/>
            <person name="Machado M.A."/>
            <person name="Madeira A.M.B.N."/>
            <person name="Martinez-Rossi N.M."/>
            <person name="Martins E.C."/>
            <person name="Meidanis J."/>
            <person name="Menck C.F.M."/>
            <person name="Miyaki C.Y."/>
            <person name="Moon D.H."/>
            <person name="Moreira L.M."/>
            <person name="Novo M.T.M."/>
            <person name="Okura V.K."/>
            <person name="Oliveira M.C."/>
            <person name="Oliveira V.R."/>
            <person name="Pereira H.A."/>
            <person name="Rossi A."/>
            <person name="Sena J.A.D."/>
            <person name="Silva C."/>
            <person name="de Souza R.F."/>
            <person name="Spinola L.A.F."/>
            <person name="Takita M.A."/>
            <person name="Tamura R.E."/>
            <person name="Teixeira E.C."/>
            <person name="Tezza R.I.D."/>
            <person name="Trindade dos Santos M."/>
            <person name="Truffi D."/>
            <person name="Tsai S.M."/>
            <person name="White F.F."/>
            <person name="Setubal J.C."/>
            <person name="Kitajima J.P."/>
        </authorList>
    </citation>
    <scope>NUCLEOTIDE SEQUENCE [LARGE SCALE GENOMIC DNA]</scope>
    <source>
        <strain>ATCC 33913 / DSM 3586 / NCPPB 528 / LMG 568 / P 25</strain>
    </source>
</reference>
<sequence length="369" mass="39292">MVRIVPSARRTRAPAKLDGRSTPDIAMSLVTTASPLTTADTYTPAADSDAPPAVRGELVINLPMRHAGQRELRLRYELVGAEQAPVVFVAGGISAHRHLAASAVFPEKGWVEGLVGAGRALDPASRRLLAFDFLGADGSLDAPIDTADQADAIAALLDALGIARLHGFVGYSYGALVGLQFASRHAARLHTLVAVSGAHRAHPYAAAWRALQRRAVALGQLQCAEHHGLALARQFAMLSYRTPEEFSERFDAPPELINGRVRVAAEDYLDAAGAQYVARTPVNAYLRLSESIDLHRIDPAAVAVPTVVVAVEGDRLVPLADLVSLVEGLGPRGSLRVLRSPFGHDAFLKEIDRIDAILTTALRTTGETA</sequence>
<gene>
    <name evidence="1" type="primary">metXS</name>
    <name evidence="7" type="ordered locus">XCC2857</name>
</gene>
<proteinExistence type="evidence at protein level"/>
<dbReference type="EC" id="2.3.1.46" evidence="1 3"/>
<dbReference type="EMBL" id="LT613641">
    <property type="protein sequence ID" value="SCN13865.1"/>
    <property type="molecule type" value="Genomic_DNA"/>
</dbReference>
<dbReference type="EMBL" id="AE008922">
    <property type="protein sequence ID" value="AAM42129.1"/>
    <property type="status" value="ALT_INIT"/>
    <property type="molecule type" value="Genomic_DNA"/>
</dbReference>
<dbReference type="RefSeq" id="NP_638205.1">
    <property type="nucleotide sequence ID" value="NC_003902.1"/>
</dbReference>
<dbReference type="SMR" id="Q8P6V8"/>
<dbReference type="STRING" id="190485.XCC2857"/>
<dbReference type="ESTHER" id="xanca-META">
    <property type="family name" value="Homoserine_transacetylase"/>
</dbReference>
<dbReference type="EnsemblBacteria" id="AAM42129">
    <property type="protein sequence ID" value="AAM42129"/>
    <property type="gene ID" value="XCC2857"/>
</dbReference>
<dbReference type="KEGG" id="xcc:XCC2857"/>
<dbReference type="PATRIC" id="fig|190485.4.peg.3059"/>
<dbReference type="eggNOG" id="COG2021">
    <property type="taxonomic scope" value="Bacteria"/>
</dbReference>
<dbReference type="HOGENOM" id="CLU_028760_3_0_6"/>
<dbReference type="OrthoDB" id="9800754at2"/>
<dbReference type="UniPathway" id="UPA00051">
    <property type="reaction ID" value="UER00075"/>
</dbReference>
<dbReference type="Proteomes" id="UP000001010">
    <property type="component" value="Chromosome"/>
</dbReference>
<dbReference type="GO" id="GO:0005737">
    <property type="term" value="C:cytoplasm"/>
    <property type="evidence" value="ECO:0007669"/>
    <property type="project" value="UniProtKB-SubCell"/>
</dbReference>
<dbReference type="GO" id="GO:0004414">
    <property type="term" value="F:homoserine O-acetyltransferase activity"/>
    <property type="evidence" value="ECO:0000318"/>
    <property type="project" value="GO_Central"/>
</dbReference>
<dbReference type="GO" id="GO:0008899">
    <property type="term" value="F:homoserine O-succinyltransferase activity"/>
    <property type="evidence" value="ECO:0007669"/>
    <property type="project" value="UniProtKB-UniRule"/>
</dbReference>
<dbReference type="GO" id="GO:0009086">
    <property type="term" value="P:methionine biosynthetic process"/>
    <property type="evidence" value="ECO:0000318"/>
    <property type="project" value="GO_Central"/>
</dbReference>
<dbReference type="FunFam" id="3.40.50.1820:FF:000456">
    <property type="entry name" value="Homoserine O-succinyltransferase"/>
    <property type="match status" value="1"/>
</dbReference>
<dbReference type="Gene3D" id="3.40.50.1820">
    <property type="entry name" value="alpha/beta hydrolase"/>
    <property type="match status" value="1"/>
</dbReference>
<dbReference type="HAMAP" id="MF_00296">
    <property type="entry name" value="MetX_acyltransf"/>
    <property type="match status" value="1"/>
</dbReference>
<dbReference type="InterPro" id="IPR000073">
    <property type="entry name" value="AB_hydrolase_1"/>
</dbReference>
<dbReference type="InterPro" id="IPR029058">
    <property type="entry name" value="AB_hydrolase_fold"/>
</dbReference>
<dbReference type="InterPro" id="IPR008220">
    <property type="entry name" value="HAT_MetX-like"/>
</dbReference>
<dbReference type="NCBIfam" id="NF006449">
    <property type="entry name" value="PRK08775.1"/>
    <property type="match status" value="1"/>
</dbReference>
<dbReference type="PANTHER" id="PTHR32268">
    <property type="entry name" value="HOMOSERINE O-ACETYLTRANSFERASE"/>
    <property type="match status" value="1"/>
</dbReference>
<dbReference type="PANTHER" id="PTHR32268:SF11">
    <property type="entry name" value="HOMOSERINE O-ACETYLTRANSFERASE"/>
    <property type="match status" value="1"/>
</dbReference>
<dbReference type="Pfam" id="PF00561">
    <property type="entry name" value="Abhydrolase_1"/>
    <property type="match status" value="1"/>
</dbReference>
<dbReference type="PIRSF" id="PIRSF000443">
    <property type="entry name" value="Homoser_Ac_trans"/>
    <property type="match status" value="1"/>
</dbReference>
<dbReference type="SUPFAM" id="SSF53474">
    <property type="entry name" value="alpha/beta-Hydrolases"/>
    <property type="match status" value="1"/>
</dbReference>
<evidence type="ECO:0000255" key="1">
    <source>
        <dbReference type="HAMAP-Rule" id="MF_00296"/>
    </source>
</evidence>
<evidence type="ECO:0000256" key="2">
    <source>
        <dbReference type="SAM" id="MobiDB-lite"/>
    </source>
</evidence>
<evidence type="ECO:0000269" key="3">
    <source>
    </source>
</evidence>
<evidence type="ECO:0000303" key="4">
    <source>
    </source>
</evidence>
<evidence type="ECO:0000305" key="5"/>
<evidence type="ECO:0000305" key="6">
    <source>
    </source>
</evidence>
<evidence type="ECO:0000312" key="7">
    <source>
        <dbReference type="EMBL" id="AAM42129.1"/>
    </source>
</evidence>
<accession>Q8P6V8</accession>
<accession>A0A1D3PD87</accession>
<organism>
    <name type="scientific">Xanthomonas campestris pv. campestris (strain ATCC 33913 / DSM 3586 / NCPPB 528 / LMG 568 / P 25)</name>
    <dbReference type="NCBI Taxonomy" id="190485"/>
    <lineage>
        <taxon>Bacteria</taxon>
        <taxon>Pseudomonadati</taxon>
        <taxon>Pseudomonadota</taxon>
        <taxon>Gammaproteobacteria</taxon>
        <taxon>Lysobacterales</taxon>
        <taxon>Lysobacteraceae</taxon>
        <taxon>Xanthomonas</taxon>
    </lineage>
</organism>
<keyword id="KW-0012">Acyltransferase</keyword>
<keyword id="KW-0028">Amino-acid biosynthesis</keyword>
<keyword id="KW-0963">Cytoplasm</keyword>
<keyword id="KW-0486">Methionine biosynthesis</keyword>
<keyword id="KW-1185">Reference proteome</keyword>
<keyword id="KW-0808">Transferase</keyword>
<feature type="chain" id="PRO_0000440305" description="Homoserine O-succinyltransferase">
    <location>
        <begin position="1"/>
        <end position="369"/>
    </location>
</feature>
<feature type="domain" description="AB hydrolase-1" evidence="1">
    <location>
        <begin position="86"/>
        <end position="350"/>
    </location>
</feature>
<feature type="region of interest" description="Disordered" evidence="2">
    <location>
        <begin position="1"/>
        <end position="21"/>
    </location>
</feature>
<feature type="region of interest" description="Important for substrate specificity" evidence="1">
    <location>
        <begin position="92"/>
        <end position="95"/>
    </location>
</feature>
<feature type="active site" description="Nucleophile" evidence="1">
    <location>
        <position position="172"/>
    </location>
</feature>
<feature type="active site" evidence="1">
    <location>
        <position position="314"/>
    </location>
</feature>
<feature type="active site" evidence="1">
    <location>
        <position position="344"/>
    </location>
</feature>
<feature type="binding site" evidence="1">
    <location>
        <position position="233"/>
    </location>
    <ligand>
        <name>substrate</name>
    </ligand>
</feature>
<feature type="binding site" evidence="1">
    <location>
        <position position="345"/>
    </location>
    <ligand>
        <name>substrate</name>
    </ligand>
</feature>
<feature type="site" description="Important for substrate specificity" evidence="1 6">
    <location>
        <position position="173"/>
    </location>
</feature>
<feature type="site" description="Important for acyl-CoA specificity" evidence="1 6">
    <location>
        <position position="209"/>
    </location>
</feature>
<protein>
    <recommendedName>
        <fullName evidence="1">Homoserine O-succinyltransferase</fullName>
        <shortName evidence="1 4">HST</shortName>
        <ecNumber evidence="1 3">2.3.1.46</ecNumber>
    </recommendedName>
    <alternativeName>
        <fullName evidence="1">Homoserine transsuccinylase</fullName>
        <shortName evidence="1">HTS</shortName>
    </alternativeName>
</protein>
<name>METXS_XANCP</name>
<comment type="function">
    <text evidence="1 3">Transfers a succinyl group from succinyl-CoA to L-homoserine, forming succinyl-L-homoserine.</text>
</comment>
<comment type="catalytic activity">
    <reaction evidence="1 3">
        <text>L-homoserine + succinyl-CoA = O-succinyl-L-homoserine + CoA</text>
        <dbReference type="Rhea" id="RHEA:22008"/>
        <dbReference type="ChEBI" id="CHEBI:57287"/>
        <dbReference type="ChEBI" id="CHEBI:57292"/>
        <dbReference type="ChEBI" id="CHEBI:57476"/>
        <dbReference type="ChEBI" id="CHEBI:57661"/>
        <dbReference type="EC" id="2.3.1.46"/>
    </reaction>
</comment>
<comment type="pathway">
    <text evidence="1">Amino-acid biosynthesis; L-methionine biosynthesis via de novo pathway; O-succinyl-L-homoserine from L-homoserine: step 1/1.</text>
</comment>
<comment type="subunit">
    <text evidence="1">Homodimer.</text>
</comment>
<comment type="subcellular location">
    <subcellularLocation>
        <location evidence="1">Cytoplasm</location>
    </subcellularLocation>
</comment>
<comment type="similarity">
    <text evidence="1">Belongs to the AB hydrolase superfamily. MetX family.</text>
</comment>
<comment type="sequence caution" evidence="5">
    <conflict type="erroneous initiation">
        <sequence resource="EMBL-CDS" id="AAM42129"/>
    </conflict>
    <text>Truncated N-terminus.</text>
</comment>